<protein>
    <recommendedName>
        <fullName evidence="1">Phosphoglucosamine mutase</fullName>
        <ecNumber evidence="1">5.4.2.10</ecNumber>
    </recommendedName>
</protein>
<dbReference type="EC" id="5.4.2.10" evidence="1"/>
<dbReference type="EMBL" id="CP000628">
    <property type="protein sequence ID" value="ACM27572.1"/>
    <property type="molecule type" value="Genomic_DNA"/>
</dbReference>
<dbReference type="RefSeq" id="WP_012652248.1">
    <property type="nucleotide sequence ID" value="NC_011985.1"/>
</dbReference>
<dbReference type="SMR" id="B9J9H0"/>
<dbReference type="STRING" id="311403.Arad_3674"/>
<dbReference type="GeneID" id="86849429"/>
<dbReference type="KEGG" id="ara:Arad_3674"/>
<dbReference type="eggNOG" id="COG1109">
    <property type="taxonomic scope" value="Bacteria"/>
</dbReference>
<dbReference type="HOGENOM" id="CLU_016950_7_0_5"/>
<dbReference type="Proteomes" id="UP000001600">
    <property type="component" value="Chromosome 1"/>
</dbReference>
<dbReference type="GO" id="GO:0005829">
    <property type="term" value="C:cytosol"/>
    <property type="evidence" value="ECO:0007669"/>
    <property type="project" value="TreeGrafter"/>
</dbReference>
<dbReference type="GO" id="GO:0000287">
    <property type="term" value="F:magnesium ion binding"/>
    <property type="evidence" value="ECO:0007669"/>
    <property type="project" value="UniProtKB-UniRule"/>
</dbReference>
<dbReference type="GO" id="GO:0008966">
    <property type="term" value="F:phosphoglucosamine mutase activity"/>
    <property type="evidence" value="ECO:0007669"/>
    <property type="project" value="UniProtKB-UniRule"/>
</dbReference>
<dbReference type="GO" id="GO:0004615">
    <property type="term" value="F:phosphomannomutase activity"/>
    <property type="evidence" value="ECO:0007669"/>
    <property type="project" value="TreeGrafter"/>
</dbReference>
<dbReference type="GO" id="GO:0005975">
    <property type="term" value="P:carbohydrate metabolic process"/>
    <property type="evidence" value="ECO:0007669"/>
    <property type="project" value="InterPro"/>
</dbReference>
<dbReference type="GO" id="GO:0009252">
    <property type="term" value="P:peptidoglycan biosynthetic process"/>
    <property type="evidence" value="ECO:0007669"/>
    <property type="project" value="TreeGrafter"/>
</dbReference>
<dbReference type="GO" id="GO:0006048">
    <property type="term" value="P:UDP-N-acetylglucosamine biosynthetic process"/>
    <property type="evidence" value="ECO:0007669"/>
    <property type="project" value="TreeGrafter"/>
</dbReference>
<dbReference type="CDD" id="cd05802">
    <property type="entry name" value="GlmM"/>
    <property type="match status" value="1"/>
</dbReference>
<dbReference type="FunFam" id="3.30.310.50:FF:000001">
    <property type="entry name" value="Phosphoglucosamine mutase"/>
    <property type="match status" value="1"/>
</dbReference>
<dbReference type="FunFam" id="3.40.120.10:FF:000001">
    <property type="entry name" value="Phosphoglucosamine mutase"/>
    <property type="match status" value="1"/>
</dbReference>
<dbReference type="FunFam" id="3.40.120.10:FF:000003">
    <property type="entry name" value="Phosphoglucosamine mutase"/>
    <property type="match status" value="1"/>
</dbReference>
<dbReference type="Gene3D" id="3.40.120.10">
    <property type="entry name" value="Alpha-D-Glucose-1,6-Bisphosphate, subunit A, domain 3"/>
    <property type="match status" value="3"/>
</dbReference>
<dbReference type="Gene3D" id="3.30.310.50">
    <property type="entry name" value="Alpha-D-phosphohexomutase, C-terminal domain"/>
    <property type="match status" value="1"/>
</dbReference>
<dbReference type="HAMAP" id="MF_01554_B">
    <property type="entry name" value="GlmM_B"/>
    <property type="match status" value="1"/>
</dbReference>
<dbReference type="InterPro" id="IPR005844">
    <property type="entry name" value="A-D-PHexomutase_a/b/a-I"/>
</dbReference>
<dbReference type="InterPro" id="IPR016055">
    <property type="entry name" value="A-D-PHexomutase_a/b/a-I/II/III"/>
</dbReference>
<dbReference type="InterPro" id="IPR005845">
    <property type="entry name" value="A-D-PHexomutase_a/b/a-II"/>
</dbReference>
<dbReference type="InterPro" id="IPR005846">
    <property type="entry name" value="A-D-PHexomutase_a/b/a-III"/>
</dbReference>
<dbReference type="InterPro" id="IPR005843">
    <property type="entry name" value="A-D-PHexomutase_C"/>
</dbReference>
<dbReference type="InterPro" id="IPR036900">
    <property type="entry name" value="A-D-PHexomutase_C_sf"/>
</dbReference>
<dbReference type="InterPro" id="IPR016066">
    <property type="entry name" value="A-D-PHexomutase_CS"/>
</dbReference>
<dbReference type="InterPro" id="IPR005841">
    <property type="entry name" value="Alpha-D-phosphohexomutase_SF"/>
</dbReference>
<dbReference type="InterPro" id="IPR006352">
    <property type="entry name" value="GlmM_bact"/>
</dbReference>
<dbReference type="InterPro" id="IPR050060">
    <property type="entry name" value="Phosphoglucosamine_mutase"/>
</dbReference>
<dbReference type="NCBIfam" id="TIGR01455">
    <property type="entry name" value="glmM"/>
    <property type="match status" value="1"/>
</dbReference>
<dbReference type="NCBIfam" id="NF008139">
    <property type="entry name" value="PRK10887.1"/>
    <property type="match status" value="1"/>
</dbReference>
<dbReference type="PANTHER" id="PTHR42946:SF1">
    <property type="entry name" value="PHOSPHOGLUCOMUTASE (ALPHA-D-GLUCOSE-1,6-BISPHOSPHATE-DEPENDENT)"/>
    <property type="match status" value="1"/>
</dbReference>
<dbReference type="PANTHER" id="PTHR42946">
    <property type="entry name" value="PHOSPHOHEXOSE MUTASE"/>
    <property type="match status" value="1"/>
</dbReference>
<dbReference type="Pfam" id="PF02878">
    <property type="entry name" value="PGM_PMM_I"/>
    <property type="match status" value="1"/>
</dbReference>
<dbReference type="Pfam" id="PF02879">
    <property type="entry name" value="PGM_PMM_II"/>
    <property type="match status" value="1"/>
</dbReference>
<dbReference type="Pfam" id="PF02880">
    <property type="entry name" value="PGM_PMM_III"/>
    <property type="match status" value="1"/>
</dbReference>
<dbReference type="Pfam" id="PF00408">
    <property type="entry name" value="PGM_PMM_IV"/>
    <property type="match status" value="1"/>
</dbReference>
<dbReference type="PRINTS" id="PR00509">
    <property type="entry name" value="PGMPMM"/>
</dbReference>
<dbReference type="SUPFAM" id="SSF55957">
    <property type="entry name" value="Phosphoglucomutase, C-terminal domain"/>
    <property type="match status" value="1"/>
</dbReference>
<dbReference type="SUPFAM" id="SSF53738">
    <property type="entry name" value="Phosphoglucomutase, first 3 domains"/>
    <property type="match status" value="3"/>
</dbReference>
<dbReference type="PROSITE" id="PS00710">
    <property type="entry name" value="PGM_PMM"/>
    <property type="match status" value="1"/>
</dbReference>
<accession>B9J9H0</accession>
<organism>
    <name type="scientific">Rhizobium rhizogenes (strain K84 / ATCC BAA-868)</name>
    <name type="common">Agrobacterium radiobacter</name>
    <dbReference type="NCBI Taxonomy" id="311403"/>
    <lineage>
        <taxon>Bacteria</taxon>
        <taxon>Pseudomonadati</taxon>
        <taxon>Pseudomonadota</taxon>
        <taxon>Alphaproteobacteria</taxon>
        <taxon>Hyphomicrobiales</taxon>
        <taxon>Rhizobiaceae</taxon>
        <taxon>Rhizobium/Agrobacterium group</taxon>
        <taxon>Rhizobium</taxon>
    </lineage>
</organism>
<name>GLMM_RHIR8</name>
<sequence>MKRRYFGTDGIRGQSNIYPMTPDLAMRVGIAAGTIFHRGSHRHRVVIGKDTRLSGYMLENAMVAGFTAAGVDAFVLGPIPTPAVAMLTRSLRADIGVMISASHNPYEDNGIKLFGPDGYKLSDDLEMKIEDLLEKDMTAHLAKSENIGRAKRVDGVHDRYIEHAKRTLPRDVTLQGLRIAIDCANGAAYKVAPAVLWELGAEVVTIGNEPNGTNINLNCGSTSPVALQKKVDEVRADIGIALDGDADRVIIVDETGTIIDGDQLMAVIAESWAENQSLRGNGIVATVMSNLGLERFLEDRGMALARTAVGDRHVVEHMRQHNFNVGGEQSGHIVLSDYGTTGDGLVAALQILAVVKRTGKPVSEVCRRFEPVPQLLRNVRISGGKPLEDNQVRKAIADAESELARNGRLVIRPSGTEPLIRVMAEGDDRGQIERIVGGLIDVISSVRNAA</sequence>
<comment type="function">
    <text evidence="1">Catalyzes the conversion of glucosamine-6-phosphate to glucosamine-1-phosphate.</text>
</comment>
<comment type="catalytic activity">
    <reaction evidence="1">
        <text>alpha-D-glucosamine 1-phosphate = D-glucosamine 6-phosphate</text>
        <dbReference type="Rhea" id="RHEA:23424"/>
        <dbReference type="ChEBI" id="CHEBI:58516"/>
        <dbReference type="ChEBI" id="CHEBI:58725"/>
        <dbReference type="EC" id="5.4.2.10"/>
    </reaction>
</comment>
<comment type="cofactor">
    <cofactor evidence="1">
        <name>Mg(2+)</name>
        <dbReference type="ChEBI" id="CHEBI:18420"/>
    </cofactor>
    <text evidence="1">Binds 1 Mg(2+) ion per subunit.</text>
</comment>
<comment type="PTM">
    <text evidence="1">Activated by phosphorylation.</text>
</comment>
<comment type="similarity">
    <text evidence="1">Belongs to the phosphohexose mutase family.</text>
</comment>
<gene>
    <name evidence="1" type="primary">glmM</name>
    <name type="ordered locus">Arad_3674</name>
</gene>
<proteinExistence type="inferred from homology"/>
<keyword id="KW-0413">Isomerase</keyword>
<keyword id="KW-0460">Magnesium</keyword>
<keyword id="KW-0479">Metal-binding</keyword>
<keyword id="KW-0597">Phosphoprotein</keyword>
<reference key="1">
    <citation type="journal article" date="2009" name="J. Bacteriol.">
        <title>Genome sequences of three Agrobacterium biovars help elucidate the evolution of multichromosome genomes in bacteria.</title>
        <authorList>
            <person name="Slater S.C."/>
            <person name="Goldman B.S."/>
            <person name="Goodner B."/>
            <person name="Setubal J.C."/>
            <person name="Farrand S.K."/>
            <person name="Nester E.W."/>
            <person name="Burr T.J."/>
            <person name="Banta L."/>
            <person name="Dickerman A.W."/>
            <person name="Paulsen I."/>
            <person name="Otten L."/>
            <person name="Suen G."/>
            <person name="Welch R."/>
            <person name="Almeida N.F."/>
            <person name="Arnold F."/>
            <person name="Burton O.T."/>
            <person name="Du Z."/>
            <person name="Ewing A."/>
            <person name="Godsy E."/>
            <person name="Heisel S."/>
            <person name="Houmiel K.L."/>
            <person name="Jhaveri J."/>
            <person name="Lu J."/>
            <person name="Miller N.M."/>
            <person name="Norton S."/>
            <person name="Chen Q."/>
            <person name="Phoolcharoen W."/>
            <person name="Ohlin V."/>
            <person name="Ondrusek D."/>
            <person name="Pride N."/>
            <person name="Stricklin S.L."/>
            <person name="Sun J."/>
            <person name="Wheeler C."/>
            <person name="Wilson L."/>
            <person name="Zhu H."/>
            <person name="Wood D.W."/>
        </authorList>
    </citation>
    <scope>NUCLEOTIDE SEQUENCE [LARGE SCALE GENOMIC DNA]</scope>
    <source>
        <strain>K84 / ATCC BAA-868</strain>
    </source>
</reference>
<feature type="chain" id="PRO_1000185343" description="Phosphoglucosamine mutase">
    <location>
        <begin position="1"/>
        <end position="450"/>
    </location>
</feature>
<feature type="active site" description="Phosphoserine intermediate" evidence="1">
    <location>
        <position position="102"/>
    </location>
</feature>
<feature type="binding site" description="via phosphate group" evidence="1">
    <location>
        <position position="102"/>
    </location>
    <ligand>
        <name>Mg(2+)</name>
        <dbReference type="ChEBI" id="CHEBI:18420"/>
    </ligand>
</feature>
<feature type="binding site" evidence="1">
    <location>
        <position position="243"/>
    </location>
    <ligand>
        <name>Mg(2+)</name>
        <dbReference type="ChEBI" id="CHEBI:18420"/>
    </ligand>
</feature>
<feature type="binding site" evidence="1">
    <location>
        <position position="245"/>
    </location>
    <ligand>
        <name>Mg(2+)</name>
        <dbReference type="ChEBI" id="CHEBI:18420"/>
    </ligand>
</feature>
<feature type="binding site" evidence="1">
    <location>
        <position position="247"/>
    </location>
    <ligand>
        <name>Mg(2+)</name>
        <dbReference type="ChEBI" id="CHEBI:18420"/>
    </ligand>
</feature>
<feature type="modified residue" description="Phosphoserine" evidence="1">
    <location>
        <position position="102"/>
    </location>
</feature>
<evidence type="ECO:0000255" key="1">
    <source>
        <dbReference type="HAMAP-Rule" id="MF_01554"/>
    </source>
</evidence>